<sequence>MDSLKNHLLIAMPSLDGSFFERTVIYVCEHDEKGAMGIVINRPIGLSVEALLIQMDLDAEANLSDDAQVLIGGPVLPDRGFVLHSPEKVWTNSEAVSDYCTLTTSRDILNAIGSADAPSQFKVALGYSGWSKDQLEQELADNTWLTIKASSELVFDVDYEQLWTLATKELGFDIWQLSSQTGHC</sequence>
<dbReference type="EMBL" id="CP000302">
    <property type="protein sequence ID" value="ABE55953.1"/>
    <property type="molecule type" value="Genomic_DNA"/>
</dbReference>
<dbReference type="RefSeq" id="WP_011497104.1">
    <property type="nucleotide sequence ID" value="NC_007954.1"/>
</dbReference>
<dbReference type="SMR" id="Q12KS3"/>
<dbReference type="STRING" id="318161.Sden_2674"/>
<dbReference type="KEGG" id="sdn:Sden_2674"/>
<dbReference type="eggNOG" id="COG1678">
    <property type="taxonomic scope" value="Bacteria"/>
</dbReference>
<dbReference type="HOGENOM" id="CLU_057596_1_0_6"/>
<dbReference type="OrthoDB" id="9807486at2"/>
<dbReference type="Proteomes" id="UP000001982">
    <property type="component" value="Chromosome"/>
</dbReference>
<dbReference type="GO" id="GO:0005829">
    <property type="term" value="C:cytosol"/>
    <property type="evidence" value="ECO:0007669"/>
    <property type="project" value="TreeGrafter"/>
</dbReference>
<dbReference type="Gene3D" id="3.40.1740.10">
    <property type="entry name" value="VC0467-like"/>
    <property type="match status" value="1"/>
</dbReference>
<dbReference type="HAMAP" id="MF_00758">
    <property type="entry name" value="UPF0301"/>
    <property type="match status" value="1"/>
</dbReference>
<dbReference type="InterPro" id="IPR003774">
    <property type="entry name" value="AlgH-like"/>
</dbReference>
<dbReference type="NCBIfam" id="NF001266">
    <property type="entry name" value="PRK00228.1-1"/>
    <property type="match status" value="1"/>
</dbReference>
<dbReference type="PANTHER" id="PTHR30327">
    <property type="entry name" value="UNCHARACTERIZED PROTEIN YQGE"/>
    <property type="match status" value="1"/>
</dbReference>
<dbReference type="PANTHER" id="PTHR30327:SF1">
    <property type="entry name" value="UPF0301 PROTEIN YQGE"/>
    <property type="match status" value="1"/>
</dbReference>
<dbReference type="Pfam" id="PF02622">
    <property type="entry name" value="DUF179"/>
    <property type="match status" value="1"/>
</dbReference>
<dbReference type="SUPFAM" id="SSF143456">
    <property type="entry name" value="VC0467-like"/>
    <property type="match status" value="1"/>
</dbReference>
<accession>Q12KS3</accession>
<protein>
    <recommendedName>
        <fullName evidence="1">UPF0301 protein Sden_2674</fullName>
    </recommendedName>
</protein>
<organism>
    <name type="scientific">Shewanella denitrificans (strain OS217 / ATCC BAA-1090 / DSM 15013)</name>
    <dbReference type="NCBI Taxonomy" id="318161"/>
    <lineage>
        <taxon>Bacteria</taxon>
        <taxon>Pseudomonadati</taxon>
        <taxon>Pseudomonadota</taxon>
        <taxon>Gammaproteobacteria</taxon>
        <taxon>Alteromonadales</taxon>
        <taxon>Shewanellaceae</taxon>
        <taxon>Shewanella</taxon>
    </lineage>
</organism>
<reference key="1">
    <citation type="submission" date="2006-03" db="EMBL/GenBank/DDBJ databases">
        <title>Complete sequence of Shewanella denitrificans OS217.</title>
        <authorList>
            <consortium name="US DOE Joint Genome Institute"/>
            <person name="Copeland A."/>
            <person name="Lucas S."/>
            <person name="Lapidus A."/>
            <person name="Barry K."/>
            <person name="Detter J.C."/>
            <person name="Glavina del Rio T."/>
            <person name="Hammon N."/>
            <person name="Israni S."/>
            <person name="Dalin E."/>
            <person name="Tice H."/>
            <person name="Pitluck S."/>
            <person name="Brettin T."/>
            <person name="Bruce D."/>
            <person name="Han C."/>
            <person name="Tapia R."/>
            <person name="Gilna P."/>
            <person name="Kiss H."/>
            <person name="Schmutz J."/>
            <person name="Larimer F."/>
            <person name="Land M."/>
            <person name="Hauser L."/>
            <person name="Kyrpides N."/>
            <person name="Lykidis A."/>
            <person name="Richardson P."/>
        </authorList>
    </citation>
    <scope>NUCLEOTIDE SEQUENCE [LARGE SCALE GENOMIC DNA]</scope>
    <source>
        <strain>OS217 / ATCC BAA-1090 / DSM 15013</strain>
    </source>
</reference>
<name>Y2674_SHEDO</name>
<gene>
    <name type="ordered locus">Sden_2674</name>
</gene>
<feature type="chain" id="PRO_1000046679" description="UPF0301 protein Sden_2674">
    <location>
        <begin position="1"/>
        <end position="184"/>
    </location>
</feature>
<comment type="similarity">
    <text evidence="1">Belongs to the UPF0301 (AlgH) family.</text>
</comment>
<keyword id="KW-1185">Reference proteome</keyword>
<evidence type="ECO:0000255" key="1">
    <source>
        <dbReference type="HAMAP-Rule" id="MF_00758"/>
    </source>
</evidence>
<proteinExistence type="inferred from homology"/>